<protein>
    <recommendedName>
        <fullName evidence="7">CUB and zona pellucida-like domain-containing protein 1</fullName>
        <shortName>CUB and ZP domain-containing protein 1</shortName>
    </recommendedName>
    <alternativeName>
        <fullName>Integral membrane-associated protein 1</fullName>
    </alternativeName>
</protein>
<name>CUZD1_MOUSE</name>
<dbReference type="EMBL" id="U69699">
    <property type="protein sequence ID" value="AAC24898.2"/>
    <property type="status" value="ALT_FRAME"/>
    <property type="molecule type" value="mRNA"/>
</dbReference>
<dbReference type="EMBL" id="AC110885">
    <property type="status" value="NOT_ANNOTATED_CDS"/>
    <property type="molecule type" value="Genomic_DNA"/>
</dbReference>
<dbReference type="EMBL" id="AC156606">
    <property type="status" value="NOT_ANNOTATED_CDS"/>
    <property type="molecule type" value="Genomic_DNA"/>
</dbReference>
<dbReference type="EMBL" id="BC140992">
    <property type="protein sequence ID" value="AAI40993.1"/>
    <property type="molecule type" value="mRNA"/>
</dbReference>
<dbReference type="EMBL" id="AK019038">
    <property type="protein sequence ID" value="BAB31520.1"/>
    <property type="molecule type" value="mRNA"/>
</dbReference>
<dbReference type="CCDS" id="CCDS40157.1"/>
<dbReference type="RefSeq" id="NP_032437.3">
    <property type="nucleotide sequence ID" value="NM_008411.3"/>
</dbReference>
<dbReference type="SMR" id="P70412"/>
<dbReference type="FunCoup" id="P70412">
    <property type="interactions" value="18"/>
</dbReference>
<dbReference type="STRING" id="10090.ENSMUSP00000037168"/>
<dbReference type="GlyCosmos" id="P70412">
    <property type="glycosylation" value="4 sites, No reported glycans"/>
</dbReference>
<dbReference type="GlyGen" id="P70412">
    <property type="glycosylation" value="4 sites"/>
</dbReference>
<dbReference type="PhosphoSitePlus" id="P70412"/>
<dbReference type="PaxDb" id="10090-ENSMUSP00000037168"/>
<dbReference type="ProteomicsDB" id="279303"/>
<dbReference type="ProteomicsDB" id="339066"/>
<dbReference type="DNASU" id="16433"/>
<dbReference type="Ensembl" id="ENSMUST00000046611.9">
    <property type="protein sequence ID" value="ENSMUSP00000037168.8"/>
    <property type="gene ID" value="ENSMUSG00000040205.9"/>
</dbReference>
<dbReference type="GeneID" id="16433"/>
<dbReference type="KEGG" id="mmu:16433"/>
<dbReference type="UCSC" id="uc009kbc.1">
    <property type="organism name" value="mouse"/>
</dbReference>
<dbReference type="AGR" id="MGI:1202881"/>
<dbReference type="CTD" id="50624"/>
<dbReference type="MGI" id="MGI:1202881">
    <property type="gene designation" value="Cuzd1"/>
</dbReference>
<dbReference type="VEuPathDB" id="HostDB:ENSMUSG00000040205"/>
<dbReference type="eggNOG" id="KOG4292">
    <property type="taxonomic scope" value="Eukaryota"/>
</dbReference>
<dbReference type="GeneTree" id="ENSGT00940000154525"/>
<dbReference type="HOGENOM" id="CLU_024908_1_0_1"/>
<dbReference type="InParanoid" id="P70412"/>
<dbReference type="OMA" id="CEMEYNS"/>
<dbReference type="OrthoDB" id="10063988at2759"/>
<dbReference type="TreeFam" id="TF351216"/>
<dbReference type="BioGRID-ORCS" id="16433">
    <property type="hits" value="2 hits in 77 CRISPR screens"/>
</dbReference>
<dbReference type="PRO" id="PR:P70412"/>
<dbReference type="Proteomes" id="UP000000589">
    <property type="component" value="Chromosome 7"/>
</dbReference>
<dbReference type="RNAct" id="P70412">
    <property type="molecule type" value="protein"/>
</dbReference>
<dbReference type="Bgee" id="ENSMUSG00000040205">
    <property type="expression patterns" value="Expressed in pyloric antrum and 49 other cell types or tissues"/>
</dbReference>
<dbReference type="GO" id="GO:0016020">
    <property type="term" value="C:membrane"/>
    <property type="evidence" value="ECO:0000303"/>
    <property type="project" value="UniProtKB"/>
</dbReference>
<dbReference type="GO" id="GO:0042588">
    <property type="term" value="C:zymogen granule"/>
    <property type="evidence" value="ECO:0000314"/>
    <property type="project" value="MGI"/>
</dbReference>
<dbReference type="GO" id="GO:0042589">
    <property type="term" value="C:zymogen granule membrane"/>
    <property type="evidence" value="ECO:0000314"/>
    <property type="project" value="MGI"/>
</dbReference>
<dbReference type="GO" id="GO:0007155">
    <property type="term" value="P:cell adhesion"/>
    <property type="evidence" value="ECO:0007669"/>
    <property type="project" value="UniProtKB-KW"/>
</dbReference>
<dbReference type="GO" id="GO:0051301">
    <property type="term" value="P:cell division"/>
    <property type="evidence" value="ECO:0007669"/>
    <property type="project" value="UniProtKB-KW"/>
</dbReference>
<dbReference type="GO" id="GO:0007565">
    <property type="term" value="P:female pregnancy"/>
    <property type="evidence" value="ECO:0000303"/>
    <property type="project" value="UniProtKB"/>
</dbReference>
<dbReference type="GO" id="GO:0032023">
    <property type="term" value="P:trypsinogen activation"/>
    <property type="evidence" value="ECO:0000315"/>
    <property type="project" value="UniProtKB"/>
</dbReference>
<dbReference type="CDD" id="cd00041">
    <property type="entry name" value="CUB"/>
    <property type="match status" value="2"/>
</dbReference>
<dbReference type="FunFam" id="2.60.120.290:FF:000078">
    <property type="entry name" value="CUB and zona pellucida-like domain-containing protein 1"/>
    <property type="match status" value="1"/>
</dbReference>
<dbReference type="FunFam" id="2.60.40.3210:FF:000009">
    <property type="entry name" value="CUB and zona pellucida-like domain-containing protein 1"/>
    <property type="match status" value="1"/>
</dbReference>
<dbReference type="FunFam" id="2.60.40.4100:FF:000005">
    <property type="entry name" value="Deleted in malignant brain tumors 1"/>
    <property type="match status" value="1"/>
</dbReference>
<dbReference type="FunFam" id="2.60.120.290:FF:000004">
    <property type="entry name" value="Metalloendopeptidase"/>
    <property type="match status" value="1"/>
</dbReference>
<dbReference type="Gene3D" id="2.60.120.290">
    <property type="entry name" value="Spermadhesin, CUB domain"/>
    <property type="match status" value="2"/>
</dbReference>
<dbReference type="Gene3D" id="2.60.40.4100">
    <property type="entry name" value="Zona pellucida, ZP-C domain"/>
    <property type="match status" value="1"/>
</dbReference>
<dbReference type="Gene3D" id="2.60.40.3210">
    <property type="entry name" value="Zona pellucida, ZP-N domain"/>
    <property type="match status" value="1"/>
</dbReference>
<dbReference type="InterPro" id="IPR000859">
    <property type="entry name" value="CUB_dom"/>
</dbReference>
<dbReference type="InterPro" id="IPR035914">
    <property type="entry name" value="Sperma_CUB_dom_sf"/>
</dbReference>
<dbReference type="InterPro" id="IPR055355">
    <property type="entry name" value="ZP-C"/>
</dbReference>
<dbReference type="InterPro" id="IPR042235">
    <property type="entry name" value="ZP-C_dom"/>
</dbReference>
<dbReference type="InterPro" id="IPR055356">
    <property type="entry name" value="ZP-N"/>
</dbReference>
<dbReference type="InterPro" id="IPR048290">
    <property type="entry name" value="ZP_chr"/>
</dbReference>
<dbReference type="InterPro" id="IPR001507">
    <property type="entry name" value="ZP_dom"/>
</dbReference>
<dbReference type="PANTHER" id="PTHR14002:SF27">
    <property type="entry name" value="CUB AND ZONA PELLUCIDA-LIKE DOMAIN-CONTAINING PROTEIN 1"/>
    <property type="match status" value="1"/>
</dbReference>
<dbReference type="PANTHER" id="PTHR14002">
    <property type="entry name" value="ENDOGLIN/TGF-BETA RECEPTOR TYPE III"/>
    <property type="match status" value="1"/>
</dbReference>
<dbReference type="Pfam" id="PF00431">
    <property type="entry name" value="CUB"/>
    <property type="match status" value="2"/>
</dbReference>
<dbReference type="Pfam" id="PF00100">
    <property type="entry name" value="Zona_pellucida"/>
    <property type="match status" value="1"/>
</dbReference>
<dbReference type="Pfam" id="PF23344">
    <property type="entry name" value="ZP-N"/>
    <property type="match status" value="1"/>
</dbReference>
<dbReference type="PRINTS" id="PR00023">
    <property type="entry name" value="ZPELLUCIDA"/>
</dbReference>
<dbReference type="SMART" id="SM00042">
    <property type="entry name" value="CUB"/>
    <property type="match status" value="2"/>
</dbReference>
<dbReference type="SMART" id="SM00241">
    <property type="entry name" value="ZP"/>
    <property type="match status" value="1"/>
</dbReference>
<dbReference type="SUPFAM" id="SSF49854">
    <property type="entry name" value="Spermadhesin, CUB domain"/>
    <property type="match status" value="2"/>
</dbReference>
<dbReference type="PROSITE" id="PS01180">
    <property type="entry name" value="CUB"/>
    <property type="match status" value="2"/>
</dbReference>
<dbReference type="PROSITE" id="PS51034">
    <property type="entry name" value="ZP_2"/>
    <property type="match status" value="1"/>
</dbReference>
<proteinExistence type="evidence at protein level"/>
<feature type="signal peptide" evidence="2">
    <location>
        <begin position="1"/>
        <end position="19"/>
    </location>
</feature>
<feature type="chain" id="PRO_0000233332" description="CUB and zona pellucida-like domain-containing protein 1" evidence="2">
    <location>
        <begin position="20"/>
        <end position="607"/>
    </location>
</feature>
<feature type="topological domain" description="Lumenal" evidence="8">
    <location>
        <begin position="20"/>
        <end position="568"/>
    </location>
</feature>
<feature type="transmembrane region" description="Helical" evidence="2">
    <location>
        <begin position="569"/>
        <end position="589"/>
    </location>
</feature>
<feature type="topological domain" description="Cytoplasmic" evidence="8">
    <location>
        <begin position="590"/>
        <end position="607"/>
    </location>
</feature>
<feature type="domain" description="CUB 1" evidence="3">
    <location>
        <begin position="20"/>
        <end position="146"/>
    </location>
</feature>
<feature type="domain" description="CUB 2" evidence="3">
    <location>
        <begin position="154"/>
        <end position="265"/>
    </location>
</feature>
<feature type="domain" description="ZP" evidence="4">
    <location>
        <begin position="276"/>
        <end position="519"/>
    </location>
</feature>
<feature type="glycosylation site" description="N-linked (GlcNAc...) asparagine" evidence="2">
    <location>
        <position position="22"/>
    </location>
</feature>
<feature type="glycosylation site" description="N-linked (GlcNAc...) asparagine" evidence="2">
    <location>
        <position position="57"/>
    </location>
</feature>
<feature type="glycosylation site" description="N-linked (GlcNAc...) asparagine" evidence="2">
    <location>
        <position position="67"/>
    </location>
</feature>
<feature type="glycosylation site" description="N-linked (GlcNAc...) asparagine" evidence="2">
    <location>
        <position position="419"/>
    </location>
</feature>
<feature type="disulfide bond" evidence="3">
    <location>
        <begin position="17"/>
        <end position="58"/>
    </location>
</feature>
<feature type="disulfide bond" evidence="3">
    <location>
        <begin position="85"/>
        <end position="107"/>
    </location>
</feature>
<feature type="disulfide bond" evidence="3">
    <location>
        <begin position="154"/>
        <end position="180"/>
    </location>
</feature>
<feature type="disulfide bond" evidence="3">
    <location>
        <begin position="207"/>
        <end position="229"/>
    </location>
</feature>
<feature type="disulfide bond" evidence="3">
    <location>
        <begin position="442"/>
        <end position="498"/>
    </location>
</feature>
<accession>P70412</accession>
<accession>B2RU69</accession>
<accession>Q9CTZ7</accession>
<gene>
    <name evidence="11" type="primary">Cuzd1</name>
    <name evidence="9" type="synonym">Itmap1</name>
</gene>
<keyword id="KW-0130">Cell adhesion</keyword>
<keyword id="KW-0131">Cell cycle</keyword>
<keyword id="KW-0132">Cell division</keyword>
<keyword id="KW-0968">Cytoplasmic vesicle</keyword>
<keyword id="KW-1015">Disulfide bond</keyword>
<keyword id="KW-0325">Glycoprotein</keyword>
<keyword id="KW-0472">Membrane</keyword>
<keyword id="KW-1185">Reference proteome</keyword>
<keyword id="KW-0677">Repeat</keyword>
<keyword id="KW-0732">Signal</keyword>
<keyword id="KW-0812">Transmembrane</keyword>
<keyword id="KW-1133">Transmembrane helix</keyword>
<evidence type="ECO:0000250" key="1">
    <source>
        <dbReference type="UniProtKB" id="Q86UP6"/>
    </source>
</evidence>
<evidence type="ECO:0000255" key="2"/>
<evidence type="ECO:0000255" key="3">
    <source>
        <dbReference type="PROSITE-ProRule" id="PRU00059"/>
    </source>
</evidence>
<evidence type="ECO:0000255" key="4">
    <source>
        <dbReference type="PROSITE-ProRule" id="PRU00375"/>
    </source>
</evidence>
<evidence type="ECO:0000269" key="5">
    <source>
    </source>
</evidence>
<evidence type="ECO:0000269" key="6">
    <source>
    </source>
</evidence>
<evidence type="ECO:0000305" key="7"/>
<evidence type="ECO:0000305" key="8">
    <source>
    </source>
</evidence>
<evidence type="ECO:0000312" key="9">
    <source>
        <dbReference type="EMBL" id="AAC24898.2"/>
    </source>
</evidence>
<evidence type="ECO:0000312" key="10">
    <source>
        <dbReference type="EMBL" id="BAB31520.1"/>
    </source>
</evidence>
<evidence type="ECO:0000312" key="11">
    <source>
        <dbReference type="MGI" id="MGI:1202881"/>
    </source>
</evidence>
<reference evidence="7 9" key="1">
    <citation type="journal article" date="1998" name="Biochem. J.">
        <title>A cDNA cloned from pregnant mouse uterus exhibits temporo-spatial expression and predicts a novel protein.</title>
        <authorList>
            <person name="Kasik J.W."/>
        </authorList>
    </citation>
    <scope>NUCLEOTIDE SEQUENCE [MRNA]</scope>
    <scope>TISSUE SPECIFICITY</scope>
    <scope>DEVELOPMENTAL STAGE</scope>
    <source>
        <strain evidence="9">CF-1</strain>
        <tissue evidence="9">Uterus</tissue>
    </source>
</reference>
<reference key="2">
    <citation type="journal article" date="2009" name="PLoS Biol.">
        <title>Lineage-specific biology revealed by a finished genome assembly of the mouse.</title>
        <authorList>
            <person name="Church D.M."/>
            <person name="Goodstadt L."/>
            <person name="Hillier L.W."/>
            <person name="Zody M.C."/>
            <person name="Goldstein S."/>
            <person name="She X."/>
            <person name="Bult C.J."/>
            <person name="Agarwala R."/>
            <person name="Cherry J.L."/>
            <person name="DiCuccio M."/>
            <person name="Hlavina W."/>
            <person name="Kapustin Y."/>
            <person name="Meric P."/>
            <person name="Maglott D."/>
            <person name="Birtle Z."/>
            <person name="Marques A.C."/>
            <person name="Graves T."/>
            <person name="Zhou S."/>
            <person name="Teague B."/>
            <person name="Potamousis K."/>
            <person name="Churas C."/>
            <person name="Place M."/>
            <person name="Herschleb J."/>
            <person name="Runnheim R."/>
            <person name="Forrest D."/>
            <person name="Amos-Landgraf J."/>
            <person name="Schwartz D.C."/>
            <person name="Cheng Z."/>
            <person name="Lindblad-Toh K."/>
            <person name="Eichler E.E."/>
            <person name="Ponting C.P."/>
        </authorList>
    </citation>
    <scope>NUCLEOTIDE SEQUENCE [LARGE SCALE GENOMIC DNA]</scope>
    <source>
        <strain>C57BL/6J</strain>
    </source>
</reference>
<reference key="3">
    <citation type="journal article" date="2004" name="Genome Res.">
        <title>The status, quality, and expansion of the NIH full-length cDNA project: the Mammalian Gene Collection (MGC).</title>
        <authorList>
            <consortium name="The MGC Project Team"/>
        </authorList>
    </citation>
    <scope>NUCLEOTIDE SEQUENCE [LARGE SCALE MRNA]</scope>
    <source>
        <tissue>Brain</tissue>
    </source>
</reference>
<reference evidence="7 10" key="4">
    <citation type="journal article" date="2005" name="Science">
        <title>The transcriptional landscape of the mammalian genome.</title>
        <authorList>
            <person name="Carninci P."/>
            <person name="Kasukawa T."/>
            <person name="Katayama S."/>
            <person name="Gough J."/>
            <person name="Frith M.C."/>
            <person name="Maeda N."/>
            <person name="Oyama R."/>
            <person name="Ravasi T."/>
            <person name="Lenhard B."/>
            <person name="Wells C."/>
            <person name="Kodzius R."/>
            <person name="Shimokawa K."/>
            <person name="Bajic V.B."/>
            <person name="Brenner S.E."/>
            <person name="Batalov S."/>
            <person name="Forrest A.R."/>
            <person name="Zavolan M."/>
            <person name="Davis M.J."/>
            <person name="Wilming L.G."/>
            <person name="Aidinis V."/>
            <person name="Allen J.E."/>
            <person name="Ambesi-Impiombato A."/>
            <person name="Apweiler R."/>
            <person name="Aturaliya R.N."/>
            <person name="Bailey T.L."/>
            <person name="Bansal M."/>
            <person name="Baxter L."/>
            <person name="Beisel K.W."/>
            <person name="Bersano T."/>
            <person name="Bono H."/>
            <person name="Chalk A.M."/>
            <person name="Chiu K.P."/>
            <person name="Choudhary V."/>
            <person name="Christoffels A."/>
            <person name="Clutterbuck D.R."/>
            <person name="Crowe M.L."/>
            <person name="Dalla E."/>
            <person name="Dalrymple B.P."/>
            <person name="de Bono B."/>
            <person name="Della Gatta G."/>
            <person name="di Bernardo D."/>
            <person name="Down T."/>
            <person name="Engstrom P."/>
            <person name="Fagiolini M."/>
            <person name="Faulkner G."/>
            <person name="Fletcher C.F."/>
            <person name="Fukushima T."/>
            <person name="Furuno M."/>
            <person name="Futaki S."/>
            <person name="Gariboldi M."/>
            <person name="Georgii-Hemming P."/>
            <person name="Gingeras T.R."/>
            <person name="Gojobori T."/>
            <person name="Green R.E."/>
            <person name="Gustincich S."/>
            <person name="Harbers M."/>
            <person name="Hayashi Y."/>
            <person name="Hensch T.K."/>
            <person name="Hirokawa N."/>
            <person name="Hill D."/>
            <person name="Huminiecki L."/>
            <person name="Iacono M."/>
            <person name="Ikeo K."/>
            <person name="Iwama A."/>
            <person name="Ishikawa T."/>
            <person name="Jakt M."/>
            <person name="Kanapin A."/>
            <person name="Katoh M."/>
            <person name="Kawasawa Y."/>
            <person name="Kelso J."/>
            <person name="Kitamura H."/>
            <person name="Kitano H."/>
            <person name="Kollias G."/>
            <person name="Krishnan S.P."/>
            <person name="Kruger A."/>
            <person name="Kummerfeld S.K."/>
            <person name="Kurochkin I.V."/>
            <person name="Lareau L.F."/>
            <person name="Lazarevic D."/>
            <person name="Lipovich L."/>
            <person name="Liu J."/>
            <person name="Liuni S."/>
            <person name="McWilliam S."/>
            <person name="Madan Babu M."/>
            <person name="Madera M."/>
            <person name="Marchionni L."/>
            <person name="Matsuda H."/>
            <person name="Matsuzawa S."/>
            <person name="Miki H."/>
            <person name="Mignone F."/>
            <person name="Miyake S."/>
            <person name="Morris K."/>
            <person name="Mottagui-Tabar S."/>
            <person name="Mulder N."/>
            <person name="Nakano N."/>
            <person name="Nakauchi H."/>
            <person name="Ng P."/>
            <person name="Nilsson R."/>
            <person name="Nishiguchi S."/>
            <person name="Nishikawa S."/>
            <person name="Nori F."/>
            <person name="Ohara O."/>
            <person name="Okazaki Y."/>
            <person name="Orlando V."/>
            <person name="Pang K.C."/>
            <person name="Pavan W.J."/>
            <person name="Pavesi G."/>
            <person name="Pesole G."/>
            <person name="Petrovsky N."/>
            <person name="Piazza S."/>
            <person name="Reed J."/>
            <person name="Reid J.F."/>
            <person name="Ring B.Z."/>
            <person name="Ringwald M."/>
            <person name="Rost B."/>
            <person name="Ruan Y."/>
            <person name="Salzberg S.L."/>
            <person name="Sandelin A."/>
            <person name="Schneider C."/>
            <person name="Schoenbach C."/>
            <person name="Sekiguchi K."/>
            <person name="Semple C.A."/>
            <person name="Seno S."/>
            <person name="Sessa L."/>
            <person name="Sheng Y."/>
            <person name="Shibata Y."/>
            <person name="Shimada H."/>
            <person name="Shimada K."/>
            <person name="Silva D."/>
            <person name="Sinclair B."/>
            <person name="Sperling S."/>
            <person name="Stupka E."/>
            <person name="Sugiura K."/>
            <person name="Sultana R."/>
            <person name="Takenaka Y."/>
            <person name="Taki K."/>
            <person name="Tammoja K."/>
            <person name="Tan S.L."/>
            <person name="Tang S."/>
            <person name="Taylor M.S."/>
            <person name="Tegner J."/>
            <person name="Teichmann S.A."/>
            <person name="Ueda H.R."/>
            <person name="van Nimwegen E."/>
            <person name="Verardo R."/>
            <person name="Wei C.L."/>
            <person name="Yagi K."/>
            <person name="Yamanishi H."/>
            <person name="Zabarovsky E."/>
            <person name="Zhu S."/>
            <person name="Zimmer A."/>
            <person name="Hide W."/>
            <person name="Bult C."/>
            <person name="Grimmond S.M."/>
            <person name="Teasdale R.D."/>
            <person name="Liu E.T."/>
            <person name="Brusic V."/>
            <person name="Quackenbush J."/>
            <person name="Wahlestedt C."/>
            <person name="Mattick J.S."/>
            <person name="Hume D.A."/>
            <person name="Kai C."/>
            <person name="Sasaki D."/>
            <person name="Tomaru Y."/>
            <person name="Fukuda S."/>
            <person name="Kanamori-Katayama M."/>
            <person name="Suzuki M."/>
            <person name="Aoki J."/>
            <person name="Arakawa T."/>
            <person name="Iida J."/>
            <person name="Imamura K."/>
            <person name="Itoh M."/>
            <person name="Kato T."/>
            <person name="Kawaji H."/>
            <person name="Kawagashira N."/>
            <person name="Kawashima T."/>
            <person name="Kojima M."/>
            <person name="Kondo S."/>
            <person name="Konno H."/>
            <person name="Nakano K."/>
            <person name="Ninomiya N."/>
            <person name="Nishio T."/>
            <person name="Okada M."/>
            <person name="Plessy C."/>
            <person name="Shibata K."/>
            <person name="Shiraki T."/>
            <person name="Suzuki S."/>
            <person name="Tagami M."/>
            <person name="Waki K."/>
            <person name="Watahiki A."/>
            <person name="Okamura-Oho Y."/>
            <person name="Suzuki H."/>
            <person name="Kawai J."/>
            <person name="Hayashizaki Y."/>
        </authorList>
    </citation>
    <scope>NUCLEOTIDE SEQUENCE [LARGE SCALE MRNA] OF 528-607</scope>
    <source>
        <strain evidence="10">C57BL/6J</strain>
        <tissue evidence="10">Pancreas</tissue>
    </source>
</reference>
<reference evidence="7" key="5">
    <citation type="journal article" date="2002" name="J. Biol. Chem.">
        <title>Protection from pancreatitis by the zymogen granule membrane protein integral membrane-associated protein-1.</title>
        <authorList>
            <person name="Imamura T."/>
            <person name="Asada M."/>
            <person name="Vogt S.K."/>
            <person name="Rudnick D.A."/>
            <person name="Lowe M.E."/>
            <person name="Muglia L.J."/>
        </authorList>
    </citation>
    <scope>FUNCTION</scope>
    <scope>SUBCELLULAR LOCATION</scope>
    <scope>TOPOLOGY</scope>
    <scope>TISSUE SPECIFICITY</scope>
    <scope>DISRUPTION PHENOTYPE</scope>
</reference>
<reference key="6">
    <citation type="journal article" date="2010" name="Cell">
        <title>A tissue-specific atlas of mouse protein phosphorylation and expression.</title>
        <authorList>
            <person name="Huttlin E.L."/>
            <person name="Jedrychowski M.P."/>
            <person name="Elias J.E."/>
            <person name="Goswami T."/>
            <person name="Rad R."/>
            <person name="Beausoleil S.A."/>
            <person name="Villen J."/>
            <person name="Haas W."/>
            <person name="Sowa M.E."/>
            <person name="Gygi S.P."/>
        </authorList>
    </citation>
    <scope>IDENTIFICATION BY MASS SPECTROMETRY [LARGE SCALE ANALYSIS]</scope>
    <source>
        <tissue>Pancreas</tissue>
    </source>
</reference>
<organism>
    <name type="scientific">Mus musculus</name>
    <name type="common">Mouse</name>
    <dbReference type="NCBI Taxonomy" id="10090"/>
    <lineage>
        <taxon>Eukaryota</taxon>
        <taxon>Metazoa</taxon>
        <taxon>Chordata</taxon>
        <taxon>Craniata</taxon>
        <taxon>Vertebrata</taxon>
        <taxon>Euteleostomi</taxon>
        <taxon>Mammalia</taxon>
        <taxon>Eutheria</taxon>
        <taxon>Euarchontoglires</taxon>
        <taxon>Glires</taxon>
        <taxon>Rodentia</taxon>
        <taxon>Myomorpha</taxon>
        <taxon>Muroidea</taxon>
        <taxon>Muridae</taxon>
        <taxon>Murinae</taxon>
        <taxon>Mus</taxon>
        <taxon>Mus</taxon>
    </lineage>
</organism>
<sequence length="607" mass="68195">MEVTGRLFIWAILAVSCGAQLNSTEAEGKSRCTASLGGANLGETHKALVLQLSANENCTWTIERPENRSIRIIFSYIKLDPGSRCETENIKVFDGSSTSGPLLGKACSRNDFVPVFESSSNSMTFQIVTGLTKFPRSVFIFYYFFSAATVIPNCGGDLRALEGSFSSPNYPKPHPELAYCVWHIQVGKGYKIQLKFTDLLLEMDENCKFDFIAVYDGPSTTAGLLKQLCGRGKPTLESSSDAMTVVLSTDYANSYKGFSASYTSIYIHDVNTTSLSCVSDKMRVIISKSYLPALNYNESNLQLNDPTCRPNVSNVIEFSIPLHECGTVKKIEDHAISYTNRITFIESPVSAVITRQKLLQIVVTCEMEYNSTVEIMYITEDDIIQNQSVLGKYNTSLALYESDSFENLVQESPYYVDLNQTLFVQATLHTSDPSLVVFLDTCRASPTSDFASPTYDLISSGCCQDETCKVYPLFGHYGRFQFNAFKFLKHLNSVYLKCKILICDNNDQTSRCNQGCVPRRKRDIPSYKWKTDSVIGPIRLKRDRSASRDSGLLPQIHEAEISNQPLSRLYLFSFMVLALNVVIVAITTVKHFLNRWMDHRYQKLQVY</sequence>
<comment type="function">
    <text evidence="1 5">Localized to zymogen granules, where it functions in trypsinogen activation (PubMed:12401800). May indirectly regulate cell motility, cell-cell and cell/extracellular matrix interactions (By similarity).</text>
</comment>
<comment type="subcellular location">
    <subcellularLocation>
        <location evidence="5">Zymogen granule membrane</location>
        <topology evidence="5">Single-pass type I membrane protein</topology>
    </subcellularLocation>
</comment>
<comment type="tissue specificity">
    <text evidence="5 6">Highly expressed in pancreatic acinar cells. Also expressed in epithelium of the uterus during late pregnancy but not detected in non-pregnant uterus or in a variety of other adult and fetal tissues.</text>
</comment>
<comment type="developmental stage">
    <text evidence="6">First detected in uterus 6 days prior to birth, increases daily to reach maximum levels 3 days before birth, abruptly decreases during the last 3 days of pregnancy and is almost undetectable by the first day after birth.</text>
</comment>
<comment type="disruption phenotype">
    <text evidence="5">Mice display increased severity of secretagogue- and diet-induced pancreatitis which seems to be due to impaired activation of trypsin.</text>
</comment>
<comment type="sequence caution" evidence="7">
    <conflict type="frameshift">
        <sequence resource="EMBL-CDS" id="AAC24898"/>
    </conflict>
</comment>